<organism>
    <name type="scientific">Acaryochloris marina (strain MBIC 11017)</name>
    <dbReference type="NCBI Taxonomy" id="329726"/>
    <lineage>
        <taxon>Bacteria</taxon>
        <taxon>Bacillati</taxon>
        <taxon>Cyanobacteriota</taxon>
        <taxon>Cyanophyceae</taxon>
        <taxon>Acaryochloridales</taxon>
        <taxon>Acaryochloridaceae</taxon>
        <taxon>Acaryochloris</taxon>
    </lineage>
</organism>
<keyword id="KW-0169">Cobalamin biosynthesis</keyword>
<keyword id="KW-0315">Glutamine amidotransferase</keyword>
<keyword id="KW-1185">Reference proteome</keyword>
<gene>
    <name evidence="1" type="primary">cobQ</name>
    <name type="ordered locus">AM1_4245</name>
</gene>
<comment type="function">
    <text evidence="1">Catalyzes amidations at positions B, D, E, and G on adenosylcobyrinic A,C-diamide. NH(2) groups are provided by glutamine, and one molecule of ATP is hydrogenolyzed for each amidation.</text>
</comment>
<comment type="pathway">
    <text evidence="1">Cofactor biosynthesis; adenosylcobalamin biosynthesis.</text>
</comment>
<comment type="similarity">
    <text evidence="1">Belongs to the CobB/CobQ family. CobQ subfamily.</text>
</comment>
<accession>B0CCR3</accession>
<name>COBQ_ACAM1</name>
<proteinExistence type="inferred from homology"/>
<evidence type="ECO:0000255" key="1">
    <source>
        <dbReference type="HAMAP-Rule" id="MF_00028"/>
    </source>
</evidence>
<reference key="1">
    <citation type="journal article" date="2008" name="Proc. Natl. Acad. Sci. U.S.A.">
        <title>Niche adaptation and genome expansion in the chlorophyll d-producing cyanobacterium Acaryochloris marina.</title>
        <authorList>
            <person name="Swingley W.D."/>
            <person name="Chen M."/>
            <person name="Cheung P.C."/>
            <person name="Conrad A.L."/>
            <person name="Dejesa L.C."/>
            <person name="Hao J."/>
            <person name="Honchak B.M."/>
            <person name="Karbach L.E."/>
            <person name="Kurdoglu A."/>
            <person name="Lahiri S."/>
            <person name="Mastrian S.D."/>
            <person name="Miyashita H."/>
            <person name="Page L."/>
            <person name="Ramakrishna P."/>
            <person name="Satoh S."/>
            <person name="Sattley W.M."/>
            <person name="Shimada Y."/>
            <person name="Taylor H.L."/>
            <person name="Tomo T."/>
            <person name="Tsuchiya T."/>
            <person name="Wang Z.T."/>
            <person name="Raymond J."/>
            <person name="Mimuro M."/>
            <person name="Blankenship R.E."/>
            <person name="Touchman J.W."/>
        </authorList>
    </citation>
    <scope>NUCLEOTIDE SEQUENCE [LARGE SCALE GENOMIC DNA]</scope>
    <source>
        <strain>MBIC 11017</strain>
    </source>
</reference>
<protein>
    <recommendedName>
        <fullName evidence="1">Cobyric acid synthase</fullName>
    </recommendedName>
</protein>
<feature type="chain" id="PRO_0000332315" description="Cobyric acid synthase">
    <location>
        <begin position="1"/>
        <end position="497"/>
    </location>
</feature>
<feature type="domain" description="GATase cobBQ-type" evidence="1">
    <location>
        <begin position="250"/>
        <end position="445"/>
    </location>
</feature>
<feature type="active site" description="Nucleophile" evidence="1">
    <location>
        <position position="331"/>
    </location>
</feature>
<feature type="active site" evidence="1">
    <location>
        <position position="437"/>
    </location>
</feature>
<dbReference type="EMBL" id="CP000828">
    <property type="protein sequence ID" value="ABW29225.1"/>
    <property type="molecule type" value="Genomic_DNA"/>
</dbReference>
<dbReference type="RefSeq" id="WP_012164556.1">
    <property type="nucleotide sequence ID" value="NC_009925.1"/>
</dbReference>
<dbReference type="SMR" id="B0CCR3"/>
<dbReference type="STRING" id="329726.AM1_4245"/>
<dbReference type="KEGG" id="amr:AM1_4245"/>
<dbReference type="eggNOG" id="COG1492">
    <property type="taxonomic scope" value="Bacteria"/>
</dbReference>
<dbReference type="HOGENOM" id="CLU_019250_2_2_3"/>
<dbReference type="OrthoDB" id="9808302at2"/>
<dbReference type="UniPathway" id="UPA00148"/>
<dbReference type="Proteomes" id="UP000000268">
    <property type="component" value="Chromosome"/>
</dbReference>
<dbReference type="GO" id="GO:0015420">
    <property type="term" value="F:ABC-type vitamin B12 transporter activity"/>
    <property type="evidence" value="ECO:0007669"/>
    <property type="project" value="UniProtKB-UniRule"/>
</dbReference>
<dbReference type="GO" id="GO:0003824">
    <property type="term" value="F:catalytic activity"/>
    <property type="evidence" value="ECO:0007669"/>
    <property type="project" value="InterPro"/>
</dbReference>
<dbReference type="GO" id="GO:0009236">
    <property type="term" value="P:cobalamin biosynthetic process"/>
    <property type="evidence" value="ECO:0007669"/>
    <property type="project" value="UniProtKB-UniRule"/>
</dbReference>
<dbReference type="CDD" id="cd05389">
    <property type="entry name" value="CobQ_N"/>
    <property type="match status" value="1"/>
</dbReference>
<dbReference type="CDD" id="cd01750">
    <property type="entry name" value="GATase1_CobQ"/>
    <property type="match status" value="1"/>
</dbReference>
<dbReference type="Gene3D" id="3.40.50.880">
    <property type="match status" value="1"/>
</dbReference>
<dbReference type="Gene3D" id="3.40.50.300">
    <property type="entry name" value="P-loop containing nucleotide triphosphate hydrolases"/>
    <property type="match status" value="1"/>
</dbReference>
<dbReference type="HAMAP" id="MF_00028">
    <property type="entry name" value="CobQ"/>
    <property type="match status" value="1"/>
</dbReference>
<dbReference type="InterPro" id="IPR029062">
    <property type="entry name" value="Class_I_gatase-like"/>
</dbReference>
<dbReference type="InterPro" id="IPR002586">
    <property type="entry name" value="CobQ/CobB/MinD/ParA_Nub-bd_dom"/>
</dbReference>
<dbReference type="InterPro" id="IPR033949">
    <property type="entry name" value="CobQ_GATase1"/>
</dbReference>
<dbReference type="InterPro" id="IPR047045">
    <property type="entry name" value="CobQ_N"/>
</dbReference>
<dbReference type="InterPro" id="IPR004459">
    <property type="entry name" value="CobQ_synth"/>
</dbReference>
<dbReference type="InterPro" id="IPR011698">
    <property type="entry name" value="GATase_3"/>
</dbReference>
<dbReference type="InterPro" id="IPR027417">
    <property type="entry name" value="P-loop_NTPase"/>
</dbReference>
<dbReference type="NCBIfam" id="TIGR00313">
    <property type="entry name" value="cobQ"/>
    <property type="match status" value="1"/>
</dbReference>
<dbReference type="NCBIfam" id="NF001989">
    <property type="entry name" value="PRK00784.1"/>
    <property type="match status" value="1"/>
</dbReference>
<dbReference type="PANTHER" id="PTHR21343:SF1">
    <property type="entry name" value="COBYRIC ACID SYNTHASE"/>
    <property type="match status" value="1"/>
</dbReference>
<dbReference type="PANTHER" id="PTHR21343">
    <property type="entry name" value="DETHIOBIOTIN SYNTHETASE"/>
    <property type="match status" value="1"/>
</dbReference>
<dbReference type="Pfam" id="PF01656">
    <property type="entry name" value="CbiA"/>
    <property type="match status" value="1"/>
</dbReference>
<dbReference type="Pfam" id="PF07685">
    <property type="entry name" value="GATase_3"/>
    <property type="match status" value="1"/>
</dbReference>
<dbReference type="SUPFAM" id="SSF52317">
    <property type="entry name" value="Class I glutamine amidotransferase-like"/>
    <property type="match status" value="1"/>
</dbReference>
<dbReference type="SUPFAM" id="SSF52540">
    <property type="entry name" value="P-loop containing nucleoside triphosphate hydrolases"/>
    <property type="match status" value="1"/>
</dbReference>
<dbReference type="PROSITE" id="PS51274">
    <property type="entry name" value="GATASE_COBBQ"/>
    <property type="match status" value="1"/>
</dbReference>
<sequence length="497" mass="54480">MGAIMVVGTTSHAGKSIMAAVICRMLKRKGYQVTPFKGQNMALNAYVTNAGDEIGHAQAVQAWAAGLEPRVEMNPILLKPQGDMTSQVILNGKAVGRTQAADYYRDYFDRGWQAITTALVTLQQEFDWIVCEGAGSPAEINLKHRDLTNMRVAKHLNAPTLLVADIDRGGVFAHIVGTLELLDPDERALIKGFVINKFRGQRSLLESGITWLEERTGIPVVGVIPWLEHSLPAEDSLDLFERRRTKPNAEVTIAVIRLPRISNFTDFDPLEAEPSVRLQFVGPNQPLGQPDAVIVPGSKTTISDLQQLQVSSMADQLRAYSQAGGMVLGICGGLQMLGQTISDPMGTEGPPGEFAGLGLLPLQTTMSGDKITRQRQAQITLPSDCSALGEDARTIQGYEIHQGQTQVLQPEAVQAWFDDPALGVVSCNHRILGTYLHGIFNNGPWRRVWLNQLRAQKNLLPLPLAIPNYKVYRDHMLDQVTDAIAPYLNLQPFLGKA</sequence>